<dbReference type="EC" id="1.1.1.103" evidence="2"/>
<dbReference type="EMBL" id="BC112535">
    <property type="protein sequence ID" value="AAI12536.1"/>
    <property type="molecule type" value="mRNA"/>
</dbReference>
<dbReference type="RefSeq" id="NP_001039569.1">
    <property type="nucleotide sequence ID" value="NM_001046104.2"/>
</dbReference>
<dbReference type="RefSeq" id="XP_005209886.1">
    <property type="nucleotide sequence ID" value="XM_005209829.5"/>
</dbReference>
<dbReference type="SMR" id="Q2KIR8"/>
<dbReference type="STRING" id="9913.ENSBTAP00000036630"/>
<dbReference type="PaxDb" id="9913-ENSBTAP00000036630"/>
<dbReference type="Ensembl" id="ENSBTAT00000036775.4">
    <property type="protein sequence ID" value="ENSBTAP00000036630.2"/>
    <property type="gene ID" value="ENSBTAG00000000011.5"/>
</dbReference>
<dbReference type="GeneID" id="511957"/>
<dbReference type="KEGG" id="bta:511957"/>
<dbReference type="CTD" id="157739"/>
<dbReference type="VEuPathDB" id="HostDB:ENSBTAG00000000011"/>
<dbReference type="VGNC" id="VGNC:108945">
    <property type="gene designation" value="TDH"/>
</dbReference>
<dbReference type="eggNOG" id="KOG2774">
    <property type="taxonomic scope" value="Eukaryota"/>
</dbReference>
<dbReference type="GeneTree" id="ENSGT00390000014037"/>
<dbReference type="HOGENOM" id="CLU_007383_19_1_1"/>
<dbReference type="InParanoid" id="Q2KIR8"/>
<dbReference type="OMA" id="HWHASPR"/>
<dbReference type="OrthoDB" id="10058185at2759"/>
<dbReference type="TreeFam" id="TF314544"/>
<dbReference type="UniPathway" id="UPA00046">
    <property type="reaction ID" value="UER00505"/>
</dbReference>
<dbReference type="Proteomes" id="UP000009136">
    <property type="component" value="Chromosome 8"/>
</dbReference>
<dbReference type="Bgee" id="ENSBTAG00000000011">
    <property type="expression patterns" value="Expressed in liver and 39 other cell types or tissues"/>
</dbReference>
<dbReference type="GO" id="GO:0005739">
    <property type="term" value="C:mitochondrion"/>
    <property type="evidence" value="ECO:0007669"/>
    <property type="project" value="UniProtKB-SubCell"/>
</dbReference>
<dbReference type="GO" id="GO:0042802">
    <property type="term" value="F:identical protein binding"/>
    <property type="evidence" value="ECO:0000250"/>
    <property type="project" value="UniProtKB"/>
</dbReference>
<dbReference type="GO" id="GO:0008743">
    <property type="term" value="F:L-threonine 3-dehydrogenase activity"/>
    <property type="evidence" value="ECO:0000250"/>
    <property type="project" value="UniProtKB"/>
</dbReference>
<dbReference type="GO" id="GO:0019518">
    <property type="term" value="P:L-threonine catabolic process to glycine"/>
    <property type="evidence" value="ECO:0007669"/>
    <property type="project" value="UniProtKB-UniPathway"/>
</dbReference>
<dbReference type="GO" id="GO:0006567">
    <property type="term" value="P:threonine catabolic process"/>
    <property type="evidence" value="ECO:0000250"/>
    <property type="project" value="UniProtKB"/>
</dbReference>
<dbReference type="CDD" id="cd05272">
    <property type="entry name" value="TDH_SDR_e"/>
    <property type="match status" value="1"/>
</dbReference>
<dbReference type="FunFam" id="3.40.50.720:FF:000077">
    <property type="entry name" value="L-threonine 3-dehydrogenase, mitochondrial"/>
    <property type="match status" value="1"/>
</dbReference>
<dbReference type="Gene3D" id="3.40.50.720">
    <property type="entry name" value="NAD(P)-binding Rossmann-like Domain"/>
    <property type="match status" value="1"/>
</dbReference>
<dbReference type="InterPro" id="IPR001509">
    <property type="entry name" value="Epimerase_deHydtase"/>
</dbReference>
<dbReference type="InterPro" id="IPR036291">
    <property type="entry name" value="NAD(P)-bd_dom_sf"/>
</dbReference>
<dbReference type="InterPro" id="IPR051225">
    <property type="entry name" value="NAD(P)_epim/dehydratase"/>
</dbReference>
<dbReference type="PANTHER" id="PTHR42687">
    <property type="entry name" value="L-THREONINE 3-DEHYDROGENASE"/>
    <property type="match status" value="1"/>
</dbReference>
<dbReference type="PANTHER" id="PTHR42687:SF1">
    <property type="entry name" value="L-THREONINE 3-DEHYDROGENASE, MITOCHONDRIAL"/>
    <property type="match status" value="1"/>
</dbReference>
<dbReference type="Pfam" id="PF01370">
    <property type="entry name" value="Epimerase"/>
    <property type="match status" value="1"/>
</dbReference>
<dbReference type="SUPFAM" id="SSF51735">
    <property type="entry name" value="NAD(P)-binding Rossmann-fold domains"/>
    <property type="match status" value="1"/>
</dbReference>
<keyword id="KW-0496">Mitochondrion</keyword>
<keyword id="KW-0520">NAD</keyword>
<keyword id="KW-0560">Oxidoreductase</keyword>
<keyword id="KW-1185">Reference proteome</keyword>
<keyword id="KW-0809">Transit peptide</keyword>
<proteinExistence type="evidence at transcript level"/>
<evidence type="ECO:0000250" key="1">
    <source>
        <dbReference type="UniProtKB" id="Q8IZJ6"/>
    </source>
</evidence>
<evidence type="ECO:0000250" key="2">
    <source>
        <dbReference type="UniProtKB" id="Q8K3F7"/>
    </source>
</evidence>
<evidence type="ECO:0000250" key="3">
    <source>
        <dbReference type="UniProtKB" id="Q8MIR0"/>
    </source>
</evidence>
<evidence type="ECO:0000255" key="4"/>
<evidence type="ECO:0000305" key="5"/>
<evidence type="ECO:0000312" key="6">
    <source>
        <dbReference type="EMBL" id="AAI12536.1"/>
    </source>
</evidence>
<comment type="function">
    <text evidence="2">Catalyzes the NAD(+)-dependent oxidation of L-threonine to 2-amino-3-ketobutyrate, mediating L-threonine catabolism.</text>
</comment>
<comment type="catalytic activity">
    <reaction evidence="2">
        <text>L-threonine + NAD(+) = (2S)-2-amino-3-oxobutanoate + NADH + H(+)</text>
        <dbReference type="Rhea" id="RHEA:13161"/>
        <dbReference type="ChEBI" id="CHEBI:15378"/>
        <dbReference type="ChEBI" id="CHEBI:57540"/>
        <dbReference type="ChEBI" id="CHEBI:57926"/>
        <dbReference type="ChEBI" id="CHEBI:57945"/>
        <dbReference type="ChEBI" id="CHEBI:78948"/>
        <dbReference type="EC" id="1.1.1.103"/>
    </reaction>
</comment>
<comment type="pathway">
    <text evidence="2">Amino-acid degradation; L-threonine degradation via oxydo-reductase pathway; glycine from L-threonine: step 1/2.</text>
</comment>
<comment type="subunit">
    <text evidence="2">Homodimer.</text>
</comment>
<comment type="subcellular location">
    <subcellularLocation>
        <location evidence="3">Mitochondrion</location>
    </subcellularLocation>
</comment>
<comment type="similarity">
    <text evidence="5">Belongs to the NAD(P)-dependent epimerase/dehydratase family.</text>
</comment>
<feature type="transit peptide" description="Mitochondrion" evidence="4">
    <location>
        <begin position="1"/>
        <end status="unknown"/>
    </location>
</feature>
<feature type="chain" id="PRO_0000298782" description="L-threonine 3-dehydrogenase, mitochondrial">
    <location>
        <begin status="unknown"/>
        <end position="373"/>
    </location>
</feature>
<feature type="active site" description="Proton donor/acceptor" evidence="2">
    <location>
        <position position="195"/>
    </location>
</feature>
<feature type="binding site" evidence="2">
    <location>
        <begin position="62"/>
        <end position="67"/>
    </location>
    <ligand>
        <name>NAD(+)</name>
        <dbReference type="ChEBI" id="CHEBI:57540"/>
    </ligand>
</feature>
<feature type="binding site" evidence="2">
    <location>
        <begin position="88"/>
        <end position="90"/>
    </location>
    <ligand>
        <name>NAD(+)</name>
        <dbReference type="ChEBI" id="CHEBI:57540"/>
    </ligand>
</feature>
<feature type="binding site" evidence="2">
    <location>
        <begin position="106"/>
        <end position="107"/>
    </location>
    <ligand>
        <name>NAD(+)</name>
        <dbReference type="ChEBI" id="CHEBI:57540"/>
    </ligand>
</feature>
<feature type="binding site" evidence="2">
    <location>
        <position position="195"/>
    </location>
    <ligand>
        <name>NAD(+)</name>
        <dbReference type="ChEBI" id="CHEBI:57540"/>
    </ligand>
</feature>
<feature type="binding site" evidence="2">
    <location>
        <position position="199"/>
    </location>
    <ligand>
        <name>NAD(+)</name>
        <dbReference type="ChEBI" id="CHEBI:57540"/>
    </ligand>
</feature>
<feature type="binding site" evidence="2">
    <location>
        <position position="225"/>
    </location>
    <ligand>
        <name>NAD(+)</name>
        <dbReference type="ChEBI" id="CHEBI:57540"/>
    </ligand>
</feature>
<protein>
    <recommendedName>
        <fullName evidence="5">L-threonine 3-dehydrogenase, mitochondrial</fullName>
        <ecNumber evidence="2">1.1.1.103</ecNumber>
    </recommendedName>
</protein>
<gene>
    <name evidence="1" type="primary">TDH</name>
</gene>
<accession>Q2KIR8</accession>
<name>TDH_BOVIN</name>
<reference evidence="6" key="1">
    <citation type="submission" date="2006-01" db="EMBL/GenBank/DDBJ databases">
        <authorList>
            <consortium name="NIH - Mammalian Gene Collection (MGC) project"/>
        </authorList>
    </citation>
    <scope>NUCLEOTIDE SEQUENCE [LARGE SCALE MRNA]</scope>
    <source>
        <strain evidence="6">Hereford</strain>
        <tissue evidence="6">Testis</tissue>
    </source>
</reference>
<sequence>MPVVRVLRRVACWMLQSPACGCRAPVLPSRFLGTSPRQIPMDANFHSTSFSEADQQRVLITGGLGQLGVGLASFLRKRFGKDNVILSDIRKPPEHVFLSGPFIYSDILDYKNLREIVVNNRITWLFHYSALLSAVGEANVSLARAVNITGLHNVLDVAAEHGLRLFVPSTIGAFGPTSPRNPTPDLCIQRPRTIYGVSKVHAELMGEYYYYRYGLDFRCLRYPGIISADSQPGGGTTDYAVQIFHEAVKNGRFECNLKPDTRLPMMYIDDCLRATLEVMEAPAESLSMRTYNISAMSFTPEELAQEVLKHVPELQVTYNVDPVRQAIADSWPMNFDDSNARKDWGWKHDFDLPELVTTMLNFHGSESRVAQAN</sequence>
<organism>
    <name type="scientific">Bos taurus</name>
    <name type="common">Bovine</name>
    <dbReference type="NCBI Taxonomy" id="9913"/>
    <lineage>
        <taxon>Eukaryota</taxon>
        <taxon>Metazoa</taxon>
        <taxon>Chordata</taxon>
        <taxon>Craniata</taxon>
        <taxon>Vertebrata</taxon>
        <taxon>Euteleostomi</taxon>
        <taxon>Mammalia</taxon>
        <taxon>Eutheria</taxon>
        <taxon>Laurasiatheria</taxon>
        <taxon>Artiodactyla</taxon>
        <taxon>Ruminantia</taxon>
        <taxon>Pecora</taxon>
        <taxon>Bovidae</taxon>
        <taxon>Bovinae</taxon>
        <taxon>Bos</taxon>
    </lineage>
</organism>